<comment type="function">
    <text evidence="1">Transports acetate.</text>
</comment>
<comment type="subcellular location">
    <subcellularLocation>
        <location evidence="1">Cell inner membrane</location>
        <topology evidence="1">Multi-pass membrane protein</topology>
    </subcellularLocation>
</comment>
<comment type="similarity">
    <text evidence="1">Belongs to the sodium:solute symporter (SSF) (TC 2.A.21) family.</text>
</comment>
<organism>
    <name type="scientific">Salmonella enteritidis PT4 (strain P125109)</name>
    <dbReference type="NCBI Taxonomy" id="550537"/>
    <lineage>
        <taxon>Bacteria</taxon>
        <taxon>Pseudomonadati</taxon>
        <taxon>Pseudomonadota</taxon>
        <taxon>Gammaproteobacteria</taxon>
        <taxon>Enterobacterales</taxon>
        <taxon>Enterobacteriaceae</taxon>
        <taxon>Salmonella</taxon>
    </lineage>
</organism>
<reference key="1">
    <citation type="journal article" date="2008" name="Genome Res.">
        <title>Comparative genome analysis of Salmonella enteritidis PT4 and Salmonella gallinarum 287/91 provides insights into evolutionary and host adaptation pathways.</title>
        <authorList>
            <person name="Thomson N.R."/>
            <person name="Clayton D.J."/>
            <person name="Windhorst D."/>
            <person name="Vernikos G."/>
            <person name="Davidson S."/>
            <person name="Churcher C."/>
            <person name="Quail M.A."/>
            <person name="Stevens M."/>
            <person name="Jones M.A."/>
            <person name="Watson M."/>
            <person name="Barron A."/>
            <person name="Layton A."/>
            <person name="Pickard D."/>
            <person name="Kingsley R.A."/>
            <person name="Bignell A."/>
            <person name="Clark L."/>
            <person name="Harris B."/>
            <person name="Ormond D."/>
            <person name="Abdellah Z."/>
            <person name="Brooks K."/>
            <person name="Cherevach I."/>
            <person name="Chillingworth T."/>
            <person name="Woodward J."/>
            <person name="Norberczak H."/>
            <person name="Lord A."/>
            <person name="Arrowsmith C."/>
            <person name="Jagels K."/>
            <person name="Moule S."/>
            <person name="Mungall K."/>
            <person name="Saunders M."/>
            <person name="Whitehead S."/>
            <person name="Chabalgoity J.A."/>
            <person name="Maskell D."/>
            <person name="Humphreys T."/>
            <person name="Roberts M."/>
            <person name="Barrow P.A."/>
            <person name="Dougan G."/>
            <person name="Parkhill J."/>
        </authorList>
    </citation>
    <scope>NUCLEOTIDE SEQUENCE [LARGE SCALE GENOMIC DNA]</scope>
    <source>
        <strain>P125109</strain>
    </source>
</reference>
<keyword id="KW-0997">Cell inner membrane</keyword>
<keyword id="KW-1003">Cell membrane</keyword>
<keyword id="KW-0406">Ion transport</keyword>
<keyword id="KW-0472">Membrane</keyword>
<keyword id="KW-0915">Sodium</keyword>
<keyword id="KW-0739">Sodium transport</keyword>
<keyword id="KW-0769">Symport</keyword>
<keyword id="KW-0812">Transmembrane</keyword>
<keyword id="KW-1133">Transmembrane helix</keyword>
<keyword id="KW-0813">Transport</keyword>
<dbReference type="EMBL" id="AM933172">
    <property type="protein sequence ID" value="CAR35605.1"/>
    <property type="molecule type" value="Genomic_DNA"/>
</dbReference>
<dbReference type="RefSeq" id="WP_000832535.1">
    <property type="nucleotide sequence ID" value="NC_011294.1"/>
</dbReference>
<dbReference type="SMR" id="B5QZ97"/>
<dbReference type="KEGG" id="set:SEN4043"/>
<dbReference type="HOGENOM" id="CLU_018808_8_3_6"/>
<dbReference type="Proteomes" id="UP000000613">
    <property type="component" value="Chromosome"/>
</dbReference>
<dbReference type="GO" id="GO:0005886">
    <property type="term" value="C:plasma membrane"/>
    <property type="evidence" value="ECO:0007669"/>
    <property type="project" value="UniProtKB-SubCell"/>
</dbReference>
<dbReference type="GO" id="GO:0015123">
    <property type="term" value="F:acetate transmembrane transporter activity"/>
    <property type="evidence" value="ECO:0007669"/>
    <property type="project" value="UniProtKB-UniRule"/>
</dbReference>
<dbReference type="GO" id="GO:0043879">
    <property type="term" value="F:glycolate transmembrane transporter activity"/>
    <property type="evidence" value="ECO:0007669"/>
    <property type="project" value="InterPro"/>
</dbReference>
<dbReference type="GO" id="GO:0015293">
    <property type="term" value="F:symporter activity"/>
    <property type="evidence" value="ECO:0007669"/>
    <property type="project" value="UniProtKB-KW"/>
</dbReference>
<dbReference type="GO" id="GO:0006847">
    <property type="term" value="P:plasma membrane acetate transport"/>
    <property type="evidence" value="ECO:0007669"/>
    <property type="project" value="TreeGrafter"/>
</dbReference>
<dbReference type="GO" id="GO:0006814">
    <property type="term" value="P:sodium ion transport"/>
    <property type="evidence" value="ECO:0007669"/>
    <property type="project" value="UniProtKB-KW"/>
</dbReference>
<dbReference type="CDD" id="cd11480">
    <property type="entry name" value="SLC5sbd_u4"/>
    <property type="match status" value="1"/>
</dbReference>
<dbReference type="FunFam" id="1.20.1730.10:FF:000001">
    <property type="entry name" value="Cation/acetate symporter ActP"/>
    <property type="match status" value="1"/>
</dbReference>
<dbReference type="Gene3D" id="1.20.1730.10">
    <property type="entry name" value="Sodium/glucose cotransporter"/>
    <property type="match status" value="1"/>
</dbReference>
<dbReference type="HAMAP" id="MF_01426">
    <property type="entry name" value="Acet_symport_ActP"/>
    <property type="match status" value="1"/>
</dbReference>
<dbReference type="InterPro" id="IPR014083">
    <property type="entry name" value="Cation/Ac_symporter_ActP"/>
</dbReference>
<dbReference type="InterPro" id="IPR038377">
    <property type="entry name" value="Na/Glc_symporter_sf"/>
</dbReference>
<dbReference type="InterPro" id="IPR001734">
    <property type="entry name" value="Na/solute_symporter"/>
</dbReference>
<dbReference type="InterPro" id="IPR018212">
    <property type="entry name" value="Na/solute_symporter_CS"/>
</dbReference>
<dbReference type="InterPro" id="IPR050277">
    <property type="entry name" value="Sodium:Solute_Symporter"/>
</dbReference>
<dbReference type="NCBIfam" id="NF006903">
    <property type="entry name" value="PRK09395.1"/>
    <property type="match status" value="1"/>
</dbReference>
<dbReference type="NCBIfam" id="NF009135">
    <property type="entry name" value="PRK12488.1"/>
    <property type="match status" value="1"/>
</dbReference>
<dbReference type="NCBIfam" id="TIGR00813">
    <property type="entry name" value="sss"/>
    <property type="match status" value="1"/>
</dbReference>
<dbReference type="NCBIfam" id="TIGR02711">
    <property type="entry name" value="symport_actP"/>
    <property type="match status" value="1"/>
</dbReference>
<dbReference type="PANTHER" id="PTHR48086:SF6">
    <property type="entry name" value="CATION_ACETATE SYMPORTER ACTP"/>
    <property type="match status" value="1"/>
</dbReference>
<dbReference type="PANTHER" id="PTHR48086">
    <property type="entry name" value="SODIUM/PROLINE SYMPORTER-RELATED"/>
    <property type="match status" value="1"/>
</dbReference>
<dbReference type="Pfam" id="PF00474">
    <property type="entry name" value="SSF"/>
    <property type="match status" value="1"/>
</dbReference>
<dbReference type="PROSITE" id="PS00456">
    <property type="entry name" value="NA_SOLUT_SYMP_1"/>
    <property type="match status" value="1"/>
</dbReference>
<dbReference type="PROSITE" id="PS00457">
    <property type="entry name" value="NA_SOLUT_SYMP_2"/>
    <property type="match status" value="1"/>
</dbReference>
<dbReference type="PROSITE" id="PS50283">
    <property type="entry name" value="NA_SOLUT_SYMP_3"/>
    <property type="match status" value="1"/>
</dbReference>
<feature type="chain" id="PRO_1000145724" description="Cation/acetate symporter ActP">
    <location>
        <begin position="1"/>
        <end position="549"/>
    </location>
</feature>
<feature type="transmembrane region" description="Helical" evidence="1">
    <location>
        <begin position="33"/>
        <end position="53"/>
    </location>
</feature>
<feature type="transmembrane region" description="Helical" evidence="1">
    <location>
        <begin position="77"/>
        <end position="97"/>
    </location>
</feature>
<feature type="transmembrane region" description="Helical" evidence="1">
    <location>
        <begin position="103"/>
        <end position="123"/>
    </location>
</feature>
<feature type="transmembrane region" description="Helical" evidence="1">
    <location>
        <begin position="148"/>
        <end position="168"/>
    </location>
</feature>
<feature type="transmembrane region" description="Helical" evidence="1">
    <location>
        <begin position="183"/>
        <end position="203"/>
    </location>
</feature>
<feature type="transmembrane region" description="Helical" evidence="1">
    <location>
        <begin position="206"/>
        <end position="226"/>
    </location>
</feature>
<feature type="transmembrane region" description="Helical" evidence="1">
    <location>
        <begin position="262"/>
        <end position="282"/>
    </location>
</feature>
<feature type="transmembrane region" description="Helical" evidence="1">
    <location>
        <begin position="303"/>
        <end position="323"/>
    </location>
</feature>
<feature type="transmembrane region" description="Helical" evidence="1">
    <location>
        <begin position="355"/>
        <end position="375"/>
    </location>
</feature>
<feature type="transmembrane region" description="Helical" evidence="1">
    <location>
        <begin position="404"/>
        <end position="424"/>
    </location>
</feature>
<feature type="transmembrane region" description="Helical" evidence="1">
    <location>
        <begin position="428"/>
        <end position="448"/>
    </location>
</feature>
<feature type="transmembrane region" description="Helical" evidence="1">
    <location>
        <begin position="464"/>
        <end position="484"/>
    </location>
</feature>
<feature type="transmembrane region" description="Helical" evidence="1">
    <location>
        <begin position="493"/>
        <end position="513"/>
    </location>
</feature>
<proteinExistence type="inferred from homology"/>
<name>ACTP_SALEP</name>
<evidence type="ECO:0000255" key="1">
    <source>
        <dbReference type="HAMAP-Rule" id="MF_01426"/>
    </source>
</evidence>
<gene>
    <name evidence="1" type="primary">actP</name>
    <name type="ordered locus">SEN4043</name>
</gene>
<sequence length="549" mass="59009">MKRVLTALAAALPFAAHAADAISGAVERQPTNWQAIIMFLIFVVFTLGITYWASKRVRSRSDYYTAGGNITGFQNGLAIAGDYMSAASFLGISALVFTSGYDGLIYSLGFLVGWPIILFLIAERLRNLGRYTFADVASYRLKQGPIRILSACGSLVVVALYLIAQMVGAGKLIELLFGLNYHIAVVLVGVLMMMYVLFGGMLATTWVQIIKAVLLLFGASFMAFMVMKHVGFSFNNLFTEAMAVHPKGTAIMSPGGLVQDPISALSLGLGLMFGTAGLPHILMRFFTVSDAREARKSVFYATGFMGYFYILTFIIGFGAIMLVGANPAYKDAAGALIGGNNMAAVHLANAVGGNLFLGFISAVAFATILAVVAGLTLAGASAVSHDLYANVFRKGATEREELKVSKITVLVLGVIAIILGVLFENQNIAFMVGLAFAIAASCNFPIILLSMYWSKLTTRGAMLGGWLGLLTAVVLMILGPTIWVQILGHEKAIFPYEYPALFSISVAFLGIWFFSATDNSAEGNREREQFRAQFIRSQTGFGVEQGRAH</sequence>
<protein>
    <recommendedName>
        <fullName evidence="1">Cation/acetate symporter ActP</fullName>
    </recommendedName>
    <alternativeName>
        <fullName evidence="1">Acetate permease</fullName>
    </alternativeName>
    <alternativeName>
        <fullName evidence="1">Acetate transporter ActP</fullName>
    </alternativeName>
</protein>
<accession>B5QZ97</accession>